<keyword id="KW-0963">Cytoplasm</keyword>
<keyword id="KW-0690">Ribosome biogenesis</keyword>
<keyword id="KW-0694">RNA-binding</keyword>
<keyword id="KW-0699">rRNA-binding</keyword>
<feature type="chain" id="PRO_1000198392" description="Dual-action ribosomal maturation protein DarP">
    <location>
        <begin position="1"/>
        <end position="183"/>
    </location>
</feature>
<comment type="function">
    <text evidence="1">Member of a network of 50S ribosomal subunit biogenesis factors which assembles along the 30S-50S interface, preventing incorrect 23S rRNA structures from forming. Promotes peptidyl transferase center (PTC) maturation.</text>
</comment>
<comment type="subcellular location">
    <subcellularLocation>
        <location evidence="1">Cytoplasm</location>
    </subcellularLocation>
    <text evidence="1">Associates with late stage pre-50S ribosomal subunits.</text>
</comment>
<comment type="similarity">
    <text evidence="1">Belongs to the DarP family.</text>
</comment>
<name>DARP_SALA4</name>
<dbReference type="EMBL" id="CP001138">
    <property type="protein sequence ID" value="ACH50075.1"/>
    <property type="molecule type" value="Genomic_DNA"/>
</dbReference>
<dbReference type="SMR" id="B5F3G6"/>
<dbReference type="KEGG" id="sea:SeAg_B4719"/>
<dbReference type="HOGENOM" id="CLU_106757_2_0_6"/>
<dbReference type="Proteomes" id="UP000008819">
    <property type="component" value="Chromosome"/>
</dbReference>
<dbReference type="GO" id="GO:0005829">
    <property type="term" value="C:cytosol"/>
    <property type="evidence" value="ECO:0007669"/>
    <property type="project" value="TreeGrafter"/>
</dbReference>
<dbReference type="GO" id="GO:0043022">
    <property type="term" value="F:ribosome binding"/>
    <property type="evidence" value="ECO:0007669"/>
    <property type="project" value="UniProtKB-UniRule"/>
</dbReference>
<dbReference type="GO" id="GO:0019843">
    <property type="term" value="F:rRNA binding"/>
    <property type="evidence" value="ECO:0007669"/>
    <property type="project" value="UniProtKB-UniRule"/>
</dbReference>
<dbReference type="GO" id="GO:1902626">
    <property type="term" value="P:assembly of large subunit precursor of preribosome"/>
    <property type="evidence" value="ECO:0007669"/>
    <property type="project" value="UniProtKB-UniRule"/>
</dbReference>
<dbReference type="CDD" id="cd16331">
    <property type="entry name" value="YjgA-like"/>
    <property type="match status" value="1"/>
</dbReference>
<dbReference type="FunFam" id="1.10.60.30:FF:000001">
    <property type="entry name" value="UPF0307 protein YjgA"/>
    <property type="match status" value="1"/>
</dbReference>
<dbReference type="FunFam" id="1.10.60.30:FF:000002">
    <property type="entry name" value="UPF0307 protein YjgA"/>
    <property type="match status" value="1"/>
</dbReference>
<dbReference type="Gene3D" id="1.10.60.30">
    <property type="entry name" value="PSPTO4464-like domains"/>
    <property type="match status" value="2"/>
</dbReference>
<dbReference type="HAMAP" id="MF_00765">
    <property type="entry name" value="DarP"/>
    <property type="match status" value="1"/>
</dbReference>
<dbReference type="InterPro" id="IPR006839">
    <property type="entry name" value="DarP"/>
</dbReference>
<dbReference type="InterPro" id="IPR023153">
    <property type="entry name" value="DarP_sf"/>
</dbReference>
<dbReference type="NCBIfam" id="NF003593">
    <property type="entry name" value="PRK05255.1-1"/>
    <property type="match status" value="1"/>
</dbReference>
<dbReference type="PANTHER" id="PTHR38101">
    <property type="entry name" value="UPF0307 PROTEIN YJGA"/>
    <property type="match status" value="1"/>
</dbReference>
<dbReference type="PANTHER" id="PTHR38101:SF1">
    <property type="entry name" value="UPF0307 PROTEIN YJGA"/>
    <property type="match status" value="1"/>
</dbReference>
<dbReference type="Pfam" id="PF04751">
    <property type="entry name" value="DarP"/>
    <property type="match status" value="1"/>
</dbReference>
<dbReference type="PIRSF" id="PIRSF016183">
    <property type="entry name" value="UCP016183"/>
    <property type="match status" value="1"/>
</dbReference>
<dbReference type="SUPFAM" id="SSF158710">
    <property type="entry name" value="PSPTO4464-like"/>
    <property type="match status" value="1"/>
</dbReference>
<sequence>MTKQPEDWLDDVPGDDIEDEDDEIIWVSKSEIKRDAEELKRLGAELVDLGKNALDKIPLDADLRDAIELAQRIKMEGRRRQLQLIGKMLRQRDVEPIRQALDKLKNRHNQQVVLFHKLEHLRDRLIVEGDDAVAEVLTLWPHADRQQLRSLIRNAKKEKEGNKPPKSARQIFQYLRELAENEG</sequence>
<gene>
    <name evidence="1" type="primary">darP</name>
    <name type="ordered locus">SeAg_B4719</name>
</gene>
<protein>
    <recommendedName>
        <fullName evidence="1">Dual-action ribosomal maturation protein DarP</fullName>
    </recommendedName>
    <alternativeName>
        <fullName evidence="1">Large ribosomal subunit assembly factor DarP</fullName>
    </alternativeName>
</protein>
<reference key="1">
    <citation type="journal article" date="2011" name="J. Bacteriol.">
        <title>Comparative genomics of 28 Salmonella enterica isolates: evidence for CRISPR-mediated adaptive sublineage evolution.</title>
        <authorList>
            <person name="Fricke W.F."/>
            <person name="Mammel M.K."/>
            <person name="McDermott P.F."/>
            <person name="Tartera C."/>
            <person name="White D.G."/>
            <person name="Leclerc J.E."/>
            <person name="Ravel J."/>
            <person name="Cebula T.A."/>
        </authorList>
    </citation>
    <scope>NUCLEOTIDE SEQUENCE [LARGE SCALE GENOMIC DNA]</scope>
    <source>
        <strain>SL483</strain>
    </source>
</reference>
<evidence type="ECO:0000255" key="1">
    <source>
        <dbReference type="HAMAP-Rule" id="MF_00765"/>
    </source>
</evidence>
<proteinExistence type="inferred from homology"/>
<accession>B5F3G6</accession>
<organism>
    <name type="scientific">Salmonella agona (strain SL483)</name>
    <dbReference type="NCBI Taxonomy" id="454166"/>
    <lineage>
        <taxon>Bacteria</taxon>
        <taxon>Pseudomonadati</taxon>
        <taxon>Pseudomonadota</taxon>
        <taxon>Gammaproteobacteria</taxon>
        <taxon>Enterobacterales</taxon>
        <taxon>Enterobacteriaceae</taxon>
        <taxon>Salmonella</taxon>
    </lineage>
</organism>